<keyword id="KW-0067">ATP-binding</keyword>
<keyword id="KW-0963">Cytoplasm</keyword>
<keyword id="KW-0227">DNA damage</keyword>
<keyword id="KW-0233">DNA recombination</keyword>
<keyword id="KW-0234">DNA repair</keyword>
<keyword id="KW-0238">DNA-binding</keyword>
<keyword id="KW-0378">Hydrolase</keyword>
<keyword id="KW-0547">Nucleotide-binding</keyword>
<keyword id="KW-1185">Reference proteome</keyword>
<organism>
    <name type="scientific">Anaplasma marginale (strain Florida)</name>
    <dbReference type="NCBI Taxonomy" id="320483"/>
    <lineage>
        <taxon>Bacteria</taxon>
        <taxon>Pseudomonadati</taxon>
        <taxon>Pseudomonadota</taxon>
        <taxon>Alphaproteobacteria</taxon>
        <taxon>Rickettsiales</taxon>
        <taxon>Anaplasmataceae</taxon>
        <taxon>Anaplasma</taxon>
    </lineage>
</organism>
<protein>
    <recommendedName>
        <fullName evidence="1">Holliday junction branch migration complex subunit RuvB</fullName>
        <ecNumber evidence="1">3.6.4.-</ecNumber>
    </recommendedName>
</protein>
<comment type="function">
    <text evidence="1">The RuvA-RuvB-RuvC complex processes Holliday junction (HJ) DNA during genetic recombination and DNA repair, while the RuvA-RuvB complex plays an important role in the rescue of blocked DNA replication forks via replication fork reversal (RFR). RuvA specifically binds to HJ cruciform DNA, conferring on it an open structure. The RuvB hexamer acts as an ATP-dependent pump, pulling dsDNA into and through the RuvAB complex. RuvB forms 2 homohexamers on either side of HJ DNA bound by 1 or 2 RuvA tetramers; 4 subunits per hexamer contact DNA at a time. Coordinated motions by a converter formed by DNA-disengaged RuvB subunits stimulates ATP hydrolysis and nucleotide exchange. Immobilization of the converter enables RuvB to convert the ATP-contained energy into a lever motion, pulling 2 nucleotides of DNA out of the RuvA tetramer per ATP hydrolyzed, thus driving DNA branch migration. The RuvB motors rotate together with the DNA substrate, which together with the progressing nucleotide cycle form the mechanistic basis for DNA recombination by continuous HJ branch migration. Branch migration allows RuvC to scan DNA until it finds its consensus sequence, where it cleaves and resolves cruciform DNA.</text>
</comment>
<comment type="catalytic activity">
    <reaction evidence="1">
        <text>ATP + H2O = ADP + phosphate + H(+)</text>
        <dbReference type="Rhea" id="RHEA:13065"/>
        <dbReference type="ChEBI" id="CHEBI:15377"/>
        <dbReference type="ChEBI" id="CHEBI:15378"/>
        <dbReference type="ChEBI" id="CHEBI:30616"/>
        <dbReference type="ChEBI" id="CHEBI:43474"/>
        <dbReference type="ChEBI" id="CHEBI:456216"/>
    </reaction>
</comment>
<comment type="subunit">
    <text evidence="1">Homohexamer. Forms an RuvA(8)-RuvB(12)-Holliday junction (HJ) complex. HJ DNA is sandwiched between 2 RuvA tetramers; dsDNA enters through RuvA and exits via RuvB. An RuvB hexamer assembles on each DNA strand where it exits the tetramer. Each RuvB hexamer is contacted by two RuvA subunits (via domain III) on 2 adjacent RuvB subunits; this complex drives branch migration. In the full resolvosome a probable DNA-RuvA(4)-RuvB(12)-RuvC(2) complex forms which resolves the HJ.</text>
</comment>
<comment type="subcellular location">
    <subcellularLocation>
        <location evidence="1">Cytoplasm</location>
    </subcellularLocation>
</comment>
<comment type="domain">
    <text evidence="1">Has 3 domains, the large (RuvB-L) and small ATPase (RuvB-S) domains and the C-terminal head (RuvB-H) domain. The head domain binds DNA, while the ATPase domains jointly bind ATP, ADP or are empty depending on the state of the subunit in the translocation cycle. During a single DNA translocation step the structure of each domain remains the same, but their relative positions change.</text>
</comment>
<comment type="similarity">
    <text evidence="1">Belongs to the RuvB family.</text>
</comment>
<proteinExistence type="inferred from homology"/>
<sequence length="331" mass="37094">MSNDTLHKYEALPEDHRNVALRPCLIEEFVGQTEVIKNLKVFIQSAYERREPMDHVLLYGPPGLGKTTLAHIIAKELKVNFRSTAGPLLSKAGDLAAILTNLQPMDVLFIDEIHRLNRNIEEVLYSAMEDYCLDIVVGEGCGARTLKIDIPAFTLIGATTRFGLISNPLRDRFGIPLHLEFYSVDELVLVIKRAAGVICTSIDDSGAREIASRSRGTPRIALRLFRRVRDFLEFERKHGTIDGNFANSALFRLGIDGAGFDKMDLKYLKFVFEAKGPVGIDTIASALSEDVGNIEETIEPYLIKTCFIQRTPRGRVLTQKGFEYLLSSKYI</sequence>
<evidence type="ECO:0000255" key="1">
    <source>
        <dbReference type="HAMAP-Rule" id="MF_00016"/>
    </source>
</evidence>
<feature type="chain" id="PRO_1000195194" description="Holliday junction branch migration complex subunit RuvB">
    <location>
        <begin position="1"/>
        <end position="331"/>
    </location>
</feature>
<feature type="region of interest" description="Large ATPase domain (RuvB-L)" evidence="1">
    <location>
        <begin position="1"/>
        <end position="182"/>
    </location>
</feature>
<feature type="region of interest" description="Small ATPAse domain (RuvB-S)" evidence="1">
    <location>
        <begin position="183"/>
        <end position="254"/>
    </location>
</feature>
<feature type="region of interest" description="Head domain (RuvB-H)" evidence="1">
    <location>
        <begin position="257"/>
        <end position="331"/>
    </location>
</feature>
<feature type="binding site" evidence="1">
    <location>
        <position position="21"/>
    </location>
    <ligand>
        <name>ATP</name>
        <dbReference type="ChEBI" id="CHEBI:30616"/>
    </ligand>
</feature>
<feature type="binding site" evidence="1">
    <location>
        <position position="22"/>
    </location>
    <ligand>
        <name>ATP</name>
        <dbReference type="ChEBI" id="CHEBI:30616"/>
    </ligand>
</feature>
<feature type="binding site" evidence="1">
    <location>
        <position position="63"/>
    </location>
    <ligand>
        <name>ATP</name>
        <dbReference type="ChEBI" id="CHEBI:30616"/>
    </ligand>
</feature>
<feature type="binding site" evidence="1">
    <location>
        <position position="66"/>
    </location>
    <ligand>
        <name>ATP</name>
        <dbReference type="ChEBI" id="CHEBI:30616"/>
    </ligand>
</feature>
<feature type="binding site" evidence="1">
    <location>
        <position position="67"/>
    </location>
    <ligand>
        <name>ATP</name>
        <dbReference type="ChEBI" id="CHEBI:30616"/>
    </ligand>
</feature>
<feature type="binding site" evidence="1">
    <location>
        <position position="67"/>
    </location>
    <ligand>
        <name>Mg(2+)</name>
        <dbReference type="ChEBI" id="CHEBI:18420"/>
    </ligand>
</feature>
<feature type="binding site" evidence="1">
    <location>
        <position position="68"/>
    </location>
    <ligand>
        <name>ATP</name>
        <dbReference type="ChEBI" id="CHEBI:30616"/>
    </ligand>
</feature>
<feature type="binding site" evidence="1">
    <location>
        <begin position="129"/>
        <end position="131"/>
    </location>
    <ligand>
        <name>ATP</name>
        <dbReference type="ChEBI" id="CHEBI:30616"/>
    </ligand>
</feature>
<feature type="binding site" evidence="1">
    <location>
        <position position="172"/>
    </location>
    <ligand>
        <name>ATP</name>
        <dbReference type="ChEBI" id="CHEBI:30616"/>
    </ligand>
</feature>
<feature type="binding site" evidence="1">
    <location>
        <position position="182"/>
    </location>
    <ligand>
        <name>ATP</name>
        <dbReference type="ChEBI" id="CHEBI:30616"/>
    </ligand>
</feature>
<feature type="binding site" evidence="1">
    <location>
        <position position="219"/>
    </location>
    <ligand>
        <name>ATP</name>
        <dbReference type="ChEBI" id="CHEBI:30616"/>
    </ligand>
</feature>
<feature type="binding site" evidence="1">
    <location>
        <position position="310"/>
    </location>
    <ligand>
        <name>DNA</name>
        <dbReference type="ChEBI" id="CHEBI:16991"/>
    </ligand>
</feature>
<feature type="binding site" evidence="1">
    <location>
        <position position="315"/>
    </location>
    <ligand>
        <name>DNA</name>
        <dbReference type="ChEBI" id="CHEBI:16991"/>
    </ligand>
</feature>
<reference key="1">
    <citation type="journal article" date="2009" name="BMC Genomics">
        <title>Conservation in the face of diversity: multistrain analysis of an intracellular bacterium.</title>
        <authorList>
            <person name="Dark M.J."/>
            <person name="Herndon D.R."/>
            <person name="Kappmeyer L.S."/>
            <person name="Gonzales M.P."/>
            <person name="Nordeen E."/>
            <person name="Palmer G.H."/>
            <person name="Knowles D.P. Jr."/>
            <person name="Brayton K.A."/>
        </authorList>
    </citation>
    <scope>NUCLEOTIDE SEQUENCE [LARGE SCALE GENOMIC DNA]</scope>
    <source>
        <strain>Florida</strain>
    </source>
</reference>
<dbReference type="EC" id="3.6.4.-" evidence="1"/>
<dbReference type="EMBL" id="CP001079">
    <property type="protein sequence ID" value="ACM49017.1"/>
    <property type="molecule type" value="Genomic_DNA"/>
</dbReference>
<dbReference type="RefSeq" id="WP_010262857.1">
    <property type="nucleotide sequence ID" value="NZ_AFMS01000145.1"/>
</dbReference>
<dbReference type="SMR" id="B9KHQ5"/>
<dbReference type="STRING" id="320483.AMF_129"/>
<dbReference type="GeneID" id="7398591"/>
<dbReference type="KEGG" id="amf:AMF_129"/>
<dbReference type="eggNOG" id="COG2255">
    <property type="taxonomic scope" value="Bacteria"/>
</dbReference>
<dbReference type="HOGENOM" id="CLU_055599_1_0_5"/>
<dbReference type="Proteomes" id="UP000007307">
    <property type="component" value="Chromosome"/>
</dbReference>
<dbReference type="GO" id="GO:0005737">
    <property type="term" value="C:cytoplasm"/>
    <property type="evidence" value="ECO:0007669"/>
    <property type="project" value="UniProtKB-SubCell"/>
</dbReference>
<dbReference type="GO" id="GO:0048476">
    <property type="term" value="C:Holliday junction resolvase complex"/>
    <property type="evidence" value="ECO:0007669"/>
    <property type="project" value="UniProtKB-UniRule"/>
</dbReference>
<dbReference type="GO" id="GO:0005524">
    <property type="term" value="F:ATP binding"/>
    <property type="evidence" value="ECO:0007669"/>
    <property type="project" value="UniProtKB-UniRule"/>
</dbReference>
<dbReference type="GO" id="GO:0016887">
    <property type="term" value="F:ATP hydrolysis activity"/>
    <property type="evidence" value="ECO:0007669"/>
    <property type="project" value="InterPro"/>
</dbReference>
<dbReference type="GO" id="GO:0000400">
    <property type="term" value="F:four-way junction DNA binding"/>
    <property type="evidence" value="ECO:0007669"/>
    <property type="project" value="UniProtKB-UniRule"/>
</dbReference>
<dbReference type="GO" id="GO:0009378">
    <property type="term" value="F:four-way junction helicase activity"/>
    <property type="evidence" value="ECO:0007669"/>
    <property type="project" value="InterPro"/>
</dbReference>
<dbReference type="GO" id="GO:0006310">
    <property type="term" value="P:DNA recombination"/>
    <property type="evidence" value="ECO:0007669"/>
    <property type="project" value="UniProtKB-UniRule"/>
</dbReference>
<dbReference type="GO" id="GO:0006281">
    <property type="term" value="P:DNA repair"/>
    <property type="evidence" value="ECO:0007669"/>
    <property type="project" value="UniProtKB-UniRule"/>
</dbReference>
<dbReference type="CDD" id="cd00009">
    <property type="entry name" value="AAA"/>
    <property type="match status" value="1"/>
</dbReference>
<dbReference type="Gene3D" id="1.10.8.60">
    <property type="match status" value="1"/>
</dbReference>
<dbReference type="Gene3D" id="3.40.50.300">
    <property type="entry name" value="P-loop containing nucleotide triphosphate hydrolases"/>
    <property type="match status" value="1"/>
</dbReference>
<dbReference type="Gene3D" id="1.10.10.10">
    <property type="entry name" value="Winged helix-like DNA-binding domain superfamily/Winged helix DNA-binding domain"/>
    <property type="match status" value="1"/>
</dbReference>
<dbReference type="HAMAP" id="MF_00016">
    <property type="entry name" value="DNA_HJ_migration_RuvB"/>
    <property type="match status" value="1"/>
</dbReference>
<dbReference type="InterPro" id="IPR003593">
    <property type="entry name" value="AAA+_ATPase"/>
</dbReference>
<dbReference type="InterPro" id="IPR041445">
    <property type="entry name" value="AAA_lid_4"/>
</dbReference>
<dbReference type="InterPro" id="IPR004605">
    <property type="entry name" value="DNA_helicase_Holl-junc_RuvB"/>
</dbReference>
<dbReference type="InterPro" id="IPR027417">
    <property type="entry name" value="P-loop_NTPase"/>
</dbReference>
<dbReference type="InterPro" id="IPR008824">
    <property type="entry name" value="RuvB-like_N"/>
</dbReference>
<dbReference type="InterPro" id="IPR008823">
    <property type="entry name" value="RuvB_C"/>
</dbReference>
<dbReference type="InterPro" id="IPR036388">
    <property type="entry name" value="WH-like_DNA-bd_sf"/>
</dbReference>
<dbReference type="InterPro" id="IPR036390">
    <property type="entry name" value="WH_DNA-bd_sf"/>
</dbReference>
<dbReference type="NCBIfam" id="NF000868">
    <property type="entry name" value="PRK00080.1"/>
    <property type="match status" value="1"/>
</dbReference>
<dbReference type="NCBIfam" id="TIGR00635">
    <property type="entry name" value="ruvB"/>
    <property type="match status" value="1"/>
</dbReference>
<dbReference type="PANTHER" id="PTHR42848">
    <property type="match status" value="1"/>
</dbReference>
<dbReference type="PANTHER" id="PTHR42848:SF1">
    <property type="entry name" value="HOLLIDAY JUNCTION BRANCH MIGRATION COMPLEX SUBUNIT RUVB"/>
    <property type="match status" value="1"/>
</dbReference>
<dbReference type="Pfam" id="PF17864">
    <property type="entry name" value="AAA_lid_4"/>
    <property type="match status" value="1"/>
</dbReference>
<dbReference type="Pfam" id="PF05491">
    <property type="entry name" value="RuvB_C"/>
    <property type="match status" value="1"/>
</dbReference>
<dbReference type="Pfam" id="PF05496">
    <property type="entry name" value="RuvB_N"/>
    <property type="match status" value="1"/>
</dbReference>
<dbReference type="SMART" id="SM00382">
    <property type="entry name" value="AAA"/>
    <property type="match status" value="1"/>
</dbReference>
<dbReference type="SUPFAM" id="SSF52540">
    <property type="entry name" value="P-loop containing nucleoside triphosphate hydrolases"/>
    <property type="match status" value="1"/>
</dbReference>
<dbReference type="SUPFAM" id="SSF46785">
    <property type="entry name" value="Winged helix' DNA-binding domain"/>
    <property type="match status" value="1"/>
</dbReference>
<gene>
    <name evidence="1" type="primary">ruvB</name>
    <name type="ordered locus">AMF_129</name>
</gene>
<name>RUVB_ANAMF</name>
<accession>B9KHQ5</accession>